<keyword id="KW-0119">Carbohydrate metabolism</keyword>
<keyword id="KW-0378">Hydrolase</keyword>
<sequence>MNILVVKTPEELAEAGYKLIEEVVKTKENPTLGMATGSSPLGIYAEMRKNKLDTSRVTTVNLDEYVNLPHEDKNSYHYFMQEQLFDHLPFKQTYVPNGMASDLEEECKRYEGILAANPVDLQILGIGENGHIGFNEPGTPFNSPTNIVELTESTRQANLRFFEKEEDVPTHAITMGIGSIMKAKQILLVAMGSKKAEAVKELLQGAYSEACPATVLQRHPNVTVIADQEALSLCSEAIADEHRQVFTISDLLSDSRVGETAN</sequence>
<proteinExistence type="inferred from homology"/>
<accession>C1EQS8</accession>
<comment type="function">
    <text evidence="1">Catalyzes the reversible isomerization-deamination of glucosamine 6-phosphate (GlcN6P) to form fructose 6-phosphate (Fru6P) and ammonium ion.</text>
</comment>
<comment type="catalytic activity">
    <reaction evidence="1">
        <text>alpha-D-glucosamine 6-phosphate + H2O = beta-D-fructose 6-phosphate + NH4(+)</text>
        <dbReference type="Rhea" id="RHEA:12172"/>
        <dbReference type="ChEBI" id="CHEBI:15377"/>
        <dbReference type="ChEBI" id="CHEBI:28938"/>
        <dbReference type="ChEBI" id="CHEBI:57634"/>
        <dbReference type="ChEBI" id="CHEBI:75989"/>
        <dbReference type="EC" id="3.5.99.6"/>
    </reaction>
</comment>
<comment type="pathway">
    <text evidence="1">Amino-sugar metabolism; N-acetylneuraminate degradation; D-fructose 6-phosphate from N-acetylneuraminate: step 5/5.</text>
</comment>
<comment type="similarity">
    <text evidence="1">Belongs to the glucosamine/galactosamine-6-phosphate isomerase family. NagB subfamily.</text>
</comment>
<feature type="chain" id="PRO_1000165011" description="Glucosamine-6-phosphate deaminase">
    <location>
        <begin position="1"/>
        <end position="262"/>
    </location>
</feature>
<feature type="active site" description="Proton acceptor; for enolization step" evidence="1">
    <location>
        <position position="63"/>
    </location>
</feature>
<feature type="active site" description="For ring-opening step" evidence="1">
    <location>
        <position position="129"/>
    </location>
</feature>
<feature type="active site" description="Proton acceptor; for ring-opening step" evidence="1">
    <location>
        <position position="131"/>
    </location>
</feature>
<feature type="active site" description="For ring-opening step" evidence="1">
    <location>
        <position position="136"/>
    </location>
</feature>
<gene>
    <name evidence="1" type="primary">nagB</name>
    <name type="ordered locus">BCA_4166</name>
</gene>
<organism>
    <name type="scientific">Bacillus cereus (strain 03BB102)</name>
    <dbReference type="NCBI Taxonomy" id="572264"/>
    <lineage>
        <taxon>Bacteria</taxon>
        <taxon>Bacillati</taxon>
        <taxon>Bacillota</taxon>
        <taxon>Bacilli</taxon>
        <taxon>Bacillales</taxon>
        <taxon>Bacillaceae</taxon>
        <taxon>Bacillus</taxon>
        <taxon>Bacillus cereus group</taxon>
    </lineage>
</organism>
<evidence type="ECO:0000255" key="1">
    <source>
        <dbReference type="HAMAP-Rule" id="MF_01241"/>
    </source>
</evidence>
<name>NAGB_BACC3</name>
<reference key="1">
    <citation type="submission" date="2009-02" db="EMBL/GenBank/DDBJ databases">
        <title>Genome sequence of Bacillus cereus 03BB102.</title>
        <authorList>
            <person name="Dodson R.J."/>
            <person name="Jackson P."/>
            <person name="Munk A.C."/>
            <person name="Brettin T."/>
            <person name="Bruce D."/>
            <person name="Detter C."/>
            <person name="Tapia R."/>
            <person name="Han C."/>
            <person name="Sutton G."/>
            <person name="Sims D."/>
        </authorList>
    </citation>
    <scope>NUCLEOTIDE SEQUENCE [LARGE SCALE GENOMIC DNA]</scope>
    <source>
        <strain>03BB102</strain>
    </source>
</reference>
<protein>
    <recommendedName>
        <fullName evidence="1">Glucosamine-6-phosphate deaminase</fullName>
        <ecNumber evidence="1">3.5.99.6</ecNumber>
    </recommendedName>
    <alternativeName>
        <fullName evidence="1">GlcN6P deaminase</fullName>
        <shortName evidence="1">GNPDA</shortName>
    </alternativeName>
    <alternativeName>
        <fullName evidence="1">Glucosamine-6-phosphate isomerase</fullName>
    </alternativeName>
</protein>
<dbReference type="EC" id="3.5.99.6" evidence="1"/>
<dbReference type="EMBL" id="CP001407">
    <property type="protein sequence ID" value="ACO27765.1"/>
    <property type="molecule type" value="Genomic_DNA"/>
</dbReference>
<dbReference type="RefSeq" id="WP_001024206.1">
    <property type="nucleotide sequence ID" value="NZ_CP009318.1"/>
</dbReference>
<dbReference type="SMR" id="C1EQS8"/>
<dbReference type="GeneID" id="75087199"/>
<dbReference type="KEGG" id="bcx:BCA_4166"/>
<dbReference type="PATRIC" id="fig|572264.18.peg.4116"/>
<dbReference type="UniPathway" id="UPA00629">
    <property type="reaction ID" value="UER00684"/>
</dbReference>
<dbReference type="Proteomes" id="UP000002210">
    <property type="component" value="Chromosome"/>
</dbReference>
<dbReference type="GO" id="GO:0005737">
    <property type="term" value="C:cytoplasm"/>
    <property type="evidence" value="ECO:0007669"/>
    <property type="project" value="TreeGrafter"/>
</dbReference>
<dbReference type="GO" id="GO:0004342">
    <property type="term" value="F:glucosamine-6-phosphate deaminase activity"/>
    <property type="evidence" value="ECO:0007669"/>
    <property type="project" value="UniProtKB-UniRule"/>
</dbReference>
<dbReference type="GO" id="GO:0042802">
    <property type="term" value="F:identical protein binding"/>
    <property type="evidence" value="ECO:0007669"/>
    <property type="project" value="TreeGrafter"/>
</dbReference>
<dbReference type="GO" id="GO:0005975">
    <property type="term" value="P:carbohydrate metabolic process"/>
    <property type="evidence" value="ECO:0007669"/>
    <property type="project" value="InterPro"/>
</dbReference>
<dbReference type="GO" id="GO:0006043">
    <property type="term" value="P:glucosamine catabolic process"/>
    <property type="evidence" value="ECO:0007669"/>
    <property type="project" value="TreeGrafter"/>
</dbReference>
<dbReference type="GO" id="GO:0006046">
    <property type="term" value="P:N-acetylglucosamine catabolic process"/>
    <property type="evidence" value="ECO:0007669"/>
    <property type="project" value="TreeGrafter"/>
</dbReference>
<dbReference type="GO" id="GO:0019262">
    <property type="term" value="P:N-acetylneuraminate catabolic process"/>
    <property type="evidence" value="ECO:0007669"/>
    <property type="project" value="UniProtKB-UniRule"/>
</dbReference>
<dbReference type="CDD" id="cd01399">
    <property type="entry name" value="GlcN6P_deaminase"/>
    <property type="match status" value="1"/>
</dbReference>
<dbReference type="FunFam" id="3.40.50.1360:FF:000003">
    <property type="entry name" value="Glucosamine-6-phosphate deaminase"/>
    <property type="match status" value="1"/>
</dbReference>
<dbReference type="Gene3D" id="3.40.50.1360">
    <property type="match status" value="1"/>
</dbReference>
<dbReference type="HAMAP" id="MF_01241">
    <property type="entry name" value="GlcN6P_deamin"/>
    <property type="match status" value="1"/>
</dbReference>
<dbReference type="InterPro" id="IPR006148">
    <property type="entry name" value="Glc/Gal-6P_isomerase"/>
</dbReference>
<dbReference type="InterPro" id="IPR004547">
    <property type="entry name" value="Glucosamine6P_isomerase"/>
</dbReference>
<dbReference type="InterPro" id="IPR018321">
    <property type="entry name" value="Glucosamine6P_isomerase_CS"/>
</dbReference>
<dbReference type="InterPro" id="IPR037171">
    <property type="entry name" value="NagB/RpiA_transferase-like"/>
</dbReference>
<dbReference type="NCBIfam" id="TIGR00502">
    <property type="entry name" value="nagB"/>
    <property type="match status" value="1"/>
</dbReference>
<dbReference type="NCBIfam" id="NF001682">
    <property type="entry name" value="PRK00443.1-1"/>
    <property type="match status" value="1"/>
</dbReference>
<dbReference type="PANTHER" id="PTHR11280">
    <property type="entry name" value="GLUCOSAMINE-6-PHOSPHATE ISOMERASE"/>
    <property type="match status" value="1"/>
</dbReference>
<dbReference type="PANTHER" id="PTHR11280:SF5">
    <property type="entry name" value="GLUCOSAMINE-6-PHOSPHATE ISOMERASE"/>
    <property type="match status" value="1"/>
</dbReference>
<dbReference type="Pfam" id="PF01182">
    <property type="entry name" value="Glucosamine_iso"/>
    <property type="match status" value="1"/>
</dbReference>
<dbReference type="SUPFAM" id="SSF100950">
    <property type="entry name" value="NagB/RpiA/CoA transferase-like"/>
    <property type="match status" value="1"/>
</dbReference>
<dbReference type="PROSITE" id="PS01161">
    <property type="entry name" value="GLC_GALNAC_ISOMERASE"/>
    <property type="match status" value="1"/>
</dbReference>